<evidence type="ECO:0000250" key="1">
    <source>
        <dbReference type="UniProtKB" id="Q12178"/>
    </source>
</evidence>
<evidence type="ECO:0000255" key="2"/>
<evidence type="ECO:0000255" key="3">
    <source>
        <dbReference type="PROSITE-ProRule" id="PRU01083"/>
    </source>
</evidence>
<evidence type="ECO:0000269" key="4">
    <source>
    </source>
</evidence>
<evidence type="ECO:0000305" key="5"/>
<evidence type="ECO:0000312" key="6">
    <source>
        <dbReference type="EMBL" id="CAA19074.1"/>
    </source>
</evidence>
<reference evidence="6" key="1">
    <citation type="journal article" date="2002" name="Nature">
        <title>The genome sequence of Schizosaccharomyces pombe.</title>
        <authorList>
            <person name="Wood V."/>
            <person name="Gwilliam R."/>
            <person name="Rajandream M.A."/>
            <person name="Lyne M.H."/>
            <person name="Lyne R."/>
            <person name="Stewart A."/>
            <person name="Sgouros J.G."/>
            <person name="Peat N."/>
            <person name="Hayles J."/>
            <person name="Baker S.G."/>
            <person name="Basham D."/>
            <person name="Bowman S."/>
            <person name="Brooks K."/>
            <person name="Brown D."/>
            <person name="Brown S."/>
            <person name="Chillingworth T."/>
            <person name="Churcher C.M."/>
            <person name="Collins M."/>
            <person name="Connor R."/>
            <person name="Cronin A."/>
            <person name="Davis P."/>
            <person name="Feltwell T."/>
            <person name="Fraser A."/>
            <person name="Gentles S."/>
            <person name="Goble A."/>
            <person name="Hamlin N."/>
            <person name="Harris D.E."/>
            <person name="Hidalgo J."/>
            <person name="Hodgson G."/>
            <person name="Holroyd S."/>
            <person name="Hornsby T."/>
            <person name="Howarth S."/>
            <person name="Huckle E.J."/>
            <person name="Hunt S."/>
            <person name="Jagels K."/>
            <person name="James K.D."/>
            <person name="Jones L."/>
            <person name="Jones M."/>
            <person name="Leather S."/>
            <person name="McDonald S."/>
            <person name="McLean J."/>
            <person name="Mooney P."/>
            <person name="Moule S."/>
            <person name="Mungall K.L."/>
            <person name="Murphy L.D."/>
            <person name="Niblett D."/>
            <person name="Odell C."/>
            <person name="Oliver K."/>
            <person name="O'Neil S."/>
            <person name="Pearson D."/>
            <person name="Quail M.A."/>
            <person name="Rabbinowitsch E."/>
            <person name="Rutherford K.M."/>
            <person name="Rutter S."/>
            <person name="Saunders D."/>
            <person name="Seeger K."/>
            <person name="Sharp S."/>
            <person name="Skelton J."/>
            <person name="Simmonds M.N."/>
            <person name="Squares R."/>
            <person name="Squares S."/>
            <person name="Stevens K."/>
            <person name="Taylor K."/>
            <person name="Taylor R.G."/>
            <person name="Tivey A."/>
            <person name="Walsh S.V."/>
            <person name="Warren T."/>
            <person name="Whitehead S."/>
            <person name="Woodward J.R."/>
            <person name="Volckaert G."/>
            <person name="Aert R."/>
            <person name="Robben J."/>
            <person name="Grymonprez B."/>
            <person name="Weltjens I."/>
            <person name="Vanstreels E."/>
            <person name="Rieger M."/>
            <person name="Schaefer M."/>
            <person name="Mueller-Auer S."/>
            <person name="Gabel C."/>
            <person name="Fuchs M."/>
            <person name="Duesterhoeft A."/>
            <person name="Fritzc C."/>
            <person name="Holzer E."/>
            <person name="Moestl D."/>
            <person name="Hilbert H."/>
            <person name="Borzym K."/>
            <person name="Langer I."/>
            <person name="Beck A."/>
            <person name="Lehrach H."/>
            <person name="Reinhardt R."/>
            <person name="Pohl T.M."/>
            <person name="Eger P."/>
            <person name="Zimmermann W."/>
            <person name="Wedler H."/>
            <person name="Wambutt R."/>
            <person name="Purnelle B."/>
            <person name="Goffeau A."/>
            <person name="Cadieu E."/>
            <person name="Dreano S."/>
            <person name="Gloux S."/>
            <person name="Lelaure V."/>
            <person name="Mottier S."/>
            <person name="Galibert F."/>
            <person name="Aves S.J."/>
            <person name="Xiang Z."/>
            <person name="Hunt C."/>
            <person name="Moore K."/>
            <person name="Hurst S.M."/>
            <person name="Lucas M."/>
            <person name="Rochet M."/>
            <person name="Gaillardin C."/>
            <person name="Tallada V.A."/>
            <person name="Garzon A."/>
            <person name="Thode G."/>
            <person name="Daga R.R."/>
            <person name="Cruzado L."/>
            <person name="Jimenez J."/>
            <person name="Sanchez M."/>
            <person name="del Rey F."/>
            <person name="Benito J."/>
            <person name="Dominguez A."/>
            <person name="Revuelta J.L."/>
            <person name="Moreno S."/>
            <person name="Armstrong J."/>
            <person name="Forsburg S.L."/>
            <person name="Cerutti L."/>
            <person name="Lowe T."/>
            <person name="McCombie W.R."/>
            <person name="Paulsen I."/>
            <person name="Potashkin J."/>
            <person name="Shpakovski G.V."/>
            <person name="Ussery D."/>
            <person name="Barrell B.G."/>
            <person name="Nurse P."/>
        </authorList>
    </citation>
    <scope>NUCLEOTIDE SEQUENCE [LARGE SCALE GENOMIC DNA]</scope>
    <source>
        <strain>972 / ATCC 24843</strain>
    </source>
</reference>
<reference evidence="5" key="2">
    <citation type="journal article" date="2006" name="Nat. Biotechnol.">
        <title>ORFeome cloning and global analysis of protein localization in the fission yeast Schizosaccharomyces pombe.</title>
        <authorList>
            <person name="Matsuyama A."/>
            <person name="Arai R."/>
            <person name="Yashiroda Y."/>
            <person name="Shirai A."/>
            <person name="Kamata A."/>
            <person name="Sekido S."/>
            <person name="Kobayashi Y."/>
            <person name="Hashimoto A."/>
            <person name="Hamamoto M."/>
            <person name="Hiraoka Y."/>
            <person name="Horinouchi S."/>
            <person name="Yoshida M."/>
        </authorList>
    </citation>
    <scope>SUBCELLULAR LOCATION [LARGE SCALE ANALYSIS]</scope>
</reference>
<proteinExistence type="inferred from homology"/>
<sequence length="162" mass="17882">MSSTELSEKDLAYLREAIKVSQQARDEGQHPFGCIIVDENDNVIMSAGNRVPDGDVTQHAETRAVGLITKTRRDLEKCTLYTSTEPCAMCSGAIFWSGIRRMIFGLSNENLIKLTQKSGECPPLYINSRDILGAASHPIEVVGPYIEDEAIIPHKGFWDGGR</sequence>
<feature type="chain" id="PRO_0000310831" description="Probable cytosine deaminase">
    <location>
        <begin position="1"/>
        <end position="162"/>
    </location>
</feature>
<feature type="domain" description="CMP/dCMP-type deaminase" evidence="3">
    <location>
        <begin position="8"/>
        <end position="132"/>
    </location>
</feature>
<feature type="active site" description="Proton donor" evidence="1">
    <location>
        <position position="61"/>
    </location>
</feature>
<feature type="binding site" evidence="1">
    <location>
        <position position="59"/>
    </location>
    <ligand>
        <name>Zn(2+)</name>
        <dbReference type="ChEBI" id="CHEBI:29105"/>
        <note>catalytic</note>
    </ligand>
</feature>
<feature type="binding site" evidence="1">
    <location>
        <position position="87"/>
    </location>
    <ligand>
        <name>Zn(2+)</name>
        <dbReference type="ChEBI" id="CHEBI:29105"/>
        <note>catalytic</note>
    </ligand>
</feature>
<feature type="binding site" evidence="1">
    <location>
        <position position="90"/>
    </location>
    <ligand>
        <name>Zn(2+)</name>
        <dbReference type="ChEBI" id="CHEBI:29105"/>
        <note>catalytic</note>
    </ligand>
</feature>
<feature type="binding site" evidence="1">
    <location>
        <position position="159"/>
    </location>
    <ligand>
        <name>substrate</name>
    </ligand>
</feature>
<keyword id="KW-0963">Cytoplasm</keyword>
<keyword id="KW-0378">Hydrolase</keyword>
<keyword id="KW-0479">Metal-binding</keyword>
<keyword id="KW-0539">Nucleus</keyword>
<keyword id="KW-1185">Reference proteome</keyword>
<keyword id="KW-0862">Zinc</keyword>
<organism>
    <name type="scientific">Schizosaccharomyces pombe (strain 972 / ATCC 24843)</name>
    <name type="common">Fission yeast</name>
    <dbReference type="NCBI Taxonomy" id="284812"/>
    <lineage>
        <taxon>Eukaryota</taxon>
        <taxon>Fungi</taxon>
        <taxon>Dikarya</taxon>
        <taxon>Ascomycota</taxon>
        <taxon>Taphrinomycotina</taxon>
        <taxon>Schizosaccharomycetes</taxon>
        <taxon>Schizosaccharomycetales</taxon>
        <taxon>Schizosaccharomycetaceae</taxon>
        <taxon>Schizosaccharomyces</taxon>
    </lineage>
</organism>
<gene>
    <name type="ORF">SPCC965.14c</name>
</gene>
<comment type="function">
    <text evidence="1">Catalyzes the hydrolytic deamination of cytosine to uracil or 5-methylcytosine to thymine. Is involved in the pyrimidine salvage pathway, which allows the cell to utilize cytosine for pyrimidine nucleotide synthesis.</text>
</comment>
<comment type="catalytic activity">
    <reaction evidence="1">
        <text>cytosine + H2O + H(+) = uracil + NH4(+)</text>
        <dbReference type="Rhea" id="RHEA:20605"/>
        <dbReference type="ChEBI" id="CHEBI:15377"/>
        <dbReference type="ChEBI" id="CHEBI:15378"/>
        <dbReference type="ChEBI" id="CHEBI:16040"/>
        <dbReference type="ChEBI" id="CHEBI:17568"/>
        <dbReference type="ChEBI" id="CHEBI:28938"/>
        <dbReference type="EC" id="3.5.4.1"/>
    </reaction>
</comment>
<comment type="cofactor">
    <cofactor evidence="1">
        <name>Zn(2+)</name>
        <dbReference type="ChEBI" id="CHEBI:29105"/>
    </cofactor>
</comment>
<comment type="pathway">
    <text evidence="1">Pyrimidine metabolism; UMP biosynthesis via salvage pathway; uracil from cytosine: step 1/1.</text>
</comment>
<comment type="subunit">
    <text evidence="1">Homodimer.</text>
</comment>
<comment type="subcellular location">
    <subcellularLocation>
        <location evidence="4">Cytoplasm</location>
    </subcellularLocation>
    <subcellularLocation>
        <location evidence="4">Nucleus</location>
    </subcellularLocation>
</comment>
<comment type="similarity">
    <text evidence="2">Belongs to the cytidine and deoxycytidylate deaminase family.</text>
</comment>
<name>FCYS_SCHPO</name>
<dbReference type="EC" id="3.5.4.1"/>
<dbReference type="EMBL" id="CU329672">
    <property type="protein sequence ID" value="CAA19074.1"/>
    <property type="molecule type" value="Genomic_DNA"/>
</dbReference>
<dbReference type="PIR" id="T41667">
    <property type="entry name" value="T41667"/>
</dbReference>
<dbReference type="RefSeq" id="NP_588524.1">
    <property type="nucleotide sequence ID" value="NM_001023513.2"/>
</dbReference>
<dbReference type="SMR" id="O59834"/>
<dbReference type="BioGRID" id="276153">
    <property type="interactions" value="5"/>
</dbReference>
<dbReference type="FunCoup" id="O59834">
    <property type="interactions" value="169"/>
</dbReference>
<dbReference type="STRING" id="284812.O59834"/>
<dbReference type="iPTMnet" id="O59834"/>
<dbReference type="PaxDb" id="4896-SPCC965.14c.1"/>
<dbReference type="EnsemblFungi" id="SPCC965.14c.1">
    <property type="protein sequence ID" value="SPCC965.14c.1:pep"/>
    <property type="gene ID" value="SPCC965.14c"/>
</dbReference>
<dbReference type="KEGG" id="spo:2539595"/>
<dbReference type="PomBase" id="SPCC965.14c"/>
<dbReference type="VEuPathDB" id="FungiDB:SPCC965.14c"/>
<dbReference type="eggNOG" id="KOG1018">
    <property type="taxonomic scope" value="Eukaryota"/>
</dbReference>
<dbReference type="HOGENOM" id="CLU_025810_5_1_1"/>
<dbReference type="InParanoid" id="O59834"/>
<dbReference type="OMA" id="GDHPENP"/>
<dbReference type="PhylomeDB" id="O59834"/>
<dbReference type="UniPathway" id="UPA00574">
    <property type="reaction ID" value="UER00635"/>
</dbReference>
<dbReference type="PRO" id="PR:O59834"/>
<dbReference type="Proteomes" id="UP000002485">
    <property type="component" value="Chromosome III"/>
</dbReference>
<dbReference type="GO" id="GO:0005829">
    <property type="term" value="C:cytosol"/>
    <property type="evidence" value="ECO:0007005"/>
    <property type="project" value="PomBase"/>
</dbReference>
<dbReference type="GO" id="GO:0005634">
    <property type="term" value="C:nucleus"/>
    <property type="evidence" value="ECO:0007005"/>
    <property type="project" value="PomBase"/>
</dbReference>
<dbReference type="GO" id="GO:0004131">
    <property type="term" value="F:cytosine deaminase activity"/>
    <property type="evidence" value="ECO:0000266"/>
    <property type="project" value="PomBase"/>
</dbReference>
<dbReference type="GO" id="GO:0008270">
    <property type="term" value="F:zinc ion binding"/>
    <property type="evidence" value="ECO:0000255"/>
    <property type="project" value="PomBase"/>
</dbReference>
<dbReference type="GO" id="GO:0019858">
    <property type="term" value="P:cytosine metabolic process"/>
    <property type="evidence" value="ECO:0000266"/>
    <property type="project" value="PomBase"/>
</dbReference>
<dbReference type="GO" id="GO:0044206">
    <property type="term" value="P:UMP salvage"/>
    <property type="evidence" value="ECO:0007669"/>
    <property type="project" value="UniProtKB-UniPathway"/>
</dbReference>
<dbReference type="CDD" id="cd01285">
    <property type="entry name" value="nucleoside_deaminase"/>
    <property type="match status" value="1"/>
</dbReference>
<dbReference type="FunFam" id="3.40.140.10:FF:000051">
    <property type="entry name" value="Nucleoside deaminase"/>
    <property type="match status" value="1"/>
</dbReference>
<dbReference type="Gene3D" id="3.40.140.10">
    <property type="entry name" value="Cytidine Deaminase, domain 2"/>
    <property type="match status" value="1"/>
</dbReference>
<dbReference type="InterPro" id="IPR016192">
    <property type="entry name" value="APOBEC/CMP_deaminase_Zn-bd"/>
</dbReference>
<dbReference type="InterPro" id="IPR002125">
    <property type="entry name" value="CMP_dCMP_dom"/>
</dbReference>
<dbReference type="InterPro" id="IPR016193">
    <property type="entry name" value="Cytidine_deaminase-like"/>
</dbReference>
<dbReference type="PANTHER" id="PTHR11079">
    <property type="entry name" value="CYTOSINE DEAMINASE FAMILY MEMBER"/>
    <property type="match status" value="1"/>
</dbReference>
<dbReference type="PANTHER" id="PTHR11079:SF149">
    <property type="entry name" value="TRNA-SPECIFIC ADENOSINE DEAMINASE 2"/>
    <property type="match status" value="1"/>
</dbReference>
<dbReference type="Pfam" id="PF00383">
    <property type="entry name" value="dCMP_cyt_deam_1"/>
    <property type="match status" value="1"/>
</dbReference>
<dbReference type="SUPFAM" id="SSF53927">
    <property type="entry name" value="Cytidine deaminase-like"/>
    <property type="match status" value="1"/>
</dbReference>
<dbReference type="PROSITE" id="PS00903">
    <property type="entry name" value="CYT_DCMP_DEAMINASES_1"/>
    <property type="match status" value="1"/>
</dbReference>
<dbReference type="PROSITE" id="PS51747">
    <property type="entry name" value="CYT_DCMP_DEAMINASES_2"/>
    <property type="match status" value="1"/>
</dbReference>
<protein>
    <recommendedName>
        <fullName>Probable cytosine deaminase</fullName>
        <ecNumber>3.5.4.1</ecNumber>
    </recommendedName>
    <alternativeName>
        <fullName>Cytosine aminohydrolase</fullName>
    </alternativeName>
</protein>
<accession>O59834</accession>